<reference key="1">
    <citation type="journal article" date="2008" name="PLoS Genet.">
        <title>Genomic islands in the pathogenic filamentous fungus Aspergillus fumigatus.</title>
        <authorList>
            <person name="Fedorova N.D."/>
            <person name="Khaldi N."/>
            <person name="Joardar V.S."/>
            <person name="Maiti R."/>
            <person name="Amedeo P."/>
            <person name="Anderson M.J."/>
            <person name="Crabtree J."/>
            <person name="Silva J.C."/>
            <person name="Badger J.H."/>
            <person name="Albarraq A."/>
            <person name="Angiuoli S."/>
            <person name="Bussey H."/>
            <person name="Bowyer P."/>
            <person name="Cotty P.J."/>
            <person name="Dyer P.S."/>
            <person name="Egan A."/>
            <person name="Galens K."/>
            <person name="Fraser-Liggett C.M."/>
            <person name="Haas B.J."/>
            <person name="Inman J.M."/>
            <person name="Kent R."/>
            <person name="Lemieux S."/>
            <person name="Malavazi I."/>
            <person name="Orvis J."/>
            <person name="Roemer T."/>
            <person name="Ronning C.M."/>
            <person name="Sundaram J.P."/>
            <person name="Sutton G."/>
            <person name="Turner G."/>
            <person name="Venter J.C."/>
            <person name="White O.R."/>
            <person name="Whitty B.R."/>
            <person name="Youngman P."/>
            <person name="Wolfe K.H."/>
            <person name="Goldman G.H."/>
            <person name="Wortman J.R."/>
            <person name="Jiang B."/>
            <person name="Denning D.W."/>
            <person name="Nierman W.C."/>
        </authorList>
    </citation>
    <scope>NUCLEOTIDE SEQUENCE [LARGE SCALE GENOMIC DNA]</scope>
    <source>
        <strain>ATCC 1007 / CBS 513.65 / DSM 816 / NCTC 3887 / NRRL 1 / QM 1276 / 107</strain>
    </source>
</reference>
<organism>
    <name type="scientific">Aspergillus clavatus (strain ATCC 1007 / CBS 513.65 / DSM 816 / NCTC 3887 / NRRL 1 / QM 1276 / 107)</name>
    <dbReference type="NCBI Taxonomy" id="344612"/>
    <lineage>
        <taxon>Eukaryota</taxon>
        <taxon>Fungi</taxon>
        <taxon>Dikarya</taxon>
        <taxon>Ascomycota</taxon>
        <taxon>Pezizomycotina</taxon>
        <taxon>Eurotiomycetes</taxon>
        <taxon>Eurotiomycetidae</taxon>
        <taxon>Eurotiales</taxon>
        <taxon>Aspergillaceae</taxon>
        <taxon>Aspergillus</taxon>
        <taxon>Aspergillus subgen. Fumigati</taxon>
    </lineage>
</organism>
<dbReference type="EC" id="3.2.1.25"/>
<dbReference type="EMBL" id="DS027053">
    <property type="protein sequence ID" value="EAW10988.1"/>
    <property type="molecule type" value="Genomic_DNA"/>
</dbReference>
<dbReference type="RefSeq" id="XP_001272414.1">
    <property type="nucleotide sequence ID" value="XM_001272413.1"/>
</dbReference>
<dbReference type="SMR" id="A1CGA8"/>
<dbReference type="STRING" id="344612.A1CGA8"/>
<dbReference type="GlyCosmos" id="A1CGA8">
    <property type="glycosylation" value="2 sites, No reported glycans"/>
</dbReference>
<dbReference type="EnsemblFungi" id="EAW10988">
    <property type="protein sequence ID" value="EAW10988"/>
    <property type="gene ID" value="ACLA_066240"/>
</dbReference>
<dbReference type="GeneID" id="4704556"/>
<dbReference type="KEGG" id="act:ACLA_066240"/>
<dbReference type="VEuPathDB" id="FungiDB:ACLA_066240"/>
<dbReference type="eggNOG" id="KOG2230">
    <property type="taxonomic scope" value="Eukaryota"/>
</dbReference>
<dbReference type="HOGENOM" id="CLU_005015_1_0_1"/>
<dbReference type="OMA" id="MFANFDY"/>
<dbReference type="OrthoDB" id="2866996at2759"/>
<dbReference type="UniPathway" id="UPA00280"/>
<dbReference type="Proteomes" id="UP000006701">
    <property type="component" value="Unassembled WGS sequence"/>
</dbReference>
<dbReference type="GO" id="GO:0004567">
    <property type="term" value="F:beta-mannosidase activity"/>
    <property type="evidence" value="ECO:0007669"/>
    <property type="project" value="UniProtKB-EC"/>
</dbReference>
<dbReference type="GO" id="GO:0006516">
    <property type="term" value="P:glycoprotein catabolic process"/>
    <property type="evidence" value="ECO:0007669"/>
    <property type="project" value="TreeGrafter"/>
</dbReference>
<dbReference type="GO" id="GO:0000272">
    <property type="term" value="P:polysaccharide catabolic process"/>
    <property type="evidence" value="ECO:0007669"/>
    <property type="project" value="UniProtKB-KW"/>
</dbReference>
<dbReference type="FunFam" id="2.60.120.260:FF:000118">
    <property type="entry name" value="Beta-mannosidase B"/>
    <property type="match status" value="1"/>
</dbReference>
<dbReference type="FunFam" id="3.20.20.80:FF:000050">
    <property type="entry name" value="Beta-mannosidase B"/>
    <property type="match status" value="1"/>
</dbReference>
<dbReference type="FunFam" id="2.60.40.10:FF:001725">
    <property type="entry name" value="Exo-beta-D-glucosaminidase"/>
    <property type="match status" value="1"/>
</dbReference>
<dbReference type="Gene3D" id="2.60.120.260">
    <property type="entry name" value="Galactose-binding domain-like"/>
    <property type="match status" value="1"/>
</dbReference>
<dbReference type="Gene3D" id="3.20.20.80">
    <property type="entry name" value="Glycosidases"/>
    <property type="match status" value="1"/>
</dbReference>
<dbReference type="Gene3D" id="2.60.40.10">
    <property type="entry name" value="Immunoglobulins"/>
    <property type="match status" value="1"/>
</dbReference>
<dbReference type="InterPro" id="IPR036156">
    <property type="entry name" value="Beta-gal/glucu_dom_sf"/>
</dbReference>
<dbReference type="InterPro" id="IPR054593">
    <property type="entry name" value="Beta-mannosidase-like_N2"/>
</dbReference>
<dbReference type="InterPro" id="IPR050887">
    <property type="entry name" value="Beta-mannosidase_GH2"/>
</dbReference>
<dbReference type="InterPro" id="IPR008979">
    <property type="entry name" value="Galactose-bd-like_sf"/>
</dbReference>
<dbReference type="InterPro" id="IPR006102">
    <property type="entry name" value="Glyco_hydro_2_Ig-like"/>
</dbReference>
<dbReference type="InterPro" id="IPR017853">
    <property type="entry name" value="Glycoside_hydrolase_SF"/>
</dbReference>
<dbReference type="InterPro" id="IPR013783">
    <property type="entry name" value="Ig-like_fold"/>
</dbReference>
<dbReference type="InterPro" id="IPR041447">
    <property type="entry name" value="Mannosidase_ig"/>
</dbReference>
<dbReference type="PANTHER" id="PTHR43730">
    <property type="entry name" value="BETA-MANNOSIDASE"/>
    <property type="match status" value="1"/>
</dbReference>
<dbReference type="PANTHER" id="PTHR43730:SF1">
    <property type="entry name" value="BETA-MANNOSIDASE"/>
    <property type="match status" value="1"/>
</dbReference>
<dbReference type="Pfam" id="PF00703">
    <property type="entry name" value="Glyco_hydro_2"/>
    <property type="match status" value="1"/>
</dbReference>
<dbReference type="Pfam" id="PF22666">
    <property type="entry name" value="Glyco_hydro_2_N2"/>
    <property type="match status" value="1"/>
</dbReference>
<dbReference type="Pfam" id="PF17786">
    <property type="entry name" value="Mannosidase_ig"/>
    <property type="match status" value="1"/>
</dbReference>
<dbReference type="SUPFAM" id="SSF51445">
    <property type="entry name" value="(Trans)glycosidases"/>
    <property type="match status" value="1"/>
</dbReference>
<dbReference type="SUPFAM" id="SSF49303">
    <property type="entry name" value="beta-Galactosidase/glucuronidase domain"/>
    <property type="match status" value="2"/>
</dbReference>
<dbReference type="SUPFAM" id="SSF49785">
    <property type="entry name" value="Galactose-binding domain-like"/>
    <property type="match status" value="1"/>
</dbReference>
<keyword id="KW-0119">Carbohydrate metabolism</keyword>
<keyword id="KW-0325">Glycoprotein</keyword>
<keyword id="KW-0326">Glycosidase</keyword>
<keyword id="KW-0378">Hydrolase</keyword>
<keyword id="KW-0624">Polysaccharide degradation</keyword>
<keyword id="KW-1185">Reference proteome</keyword>
<gene>
    <name type="primary">mndB</name>
    <name type="ORF">ACLA_066240</name>
</gene>
<accession>A1CGA8</accession>
<evidence type="ECO:0000250" key="1"/>
<evidence type="ECO:0000255" key="2"/>
<evidence type="ECO:0000305" key="3"/>
<feature type="chain" id="PRO_0000394651" description="Beta-mannosidase B">
    <location>
        <begin position="1"/>
        <end position="845"/>
    </location>
</feature>
<feature type="active site" description="Proton donor" evidence="1">
    <location>
        <position position="432"/>
    </location>
</feature>
<feature type="glycosylation site" description="N-linked (GlcNAc...) asparagine" evidence="2">
    <location>
        <position position="717"/>
    </location>
</feature>
<feature type="glycosylation site" description="N-linked (GlcNAc...) asparagine" evidence="2">
    <location>
        <position position="723"/>
    </location>
</feature>
<sequence>MAALQRFPLSKGWSFKDSEDKSEDAWMPVPVVPSVVQQDLQANNKLKDPYIGFNELETRWVNEKSWTYKTTFQKPAVPAGSAIFLAFDGLDTFATVKLDGNVILESDNMFLAHRLDVTKALEAEGDHSLEIDFDCAFLRAKELRKQDSKHNWASFNGDPSRLSVRKSQYHWGWDWGPVLMTAGIWREVRLEVYTARVADLWTDVQLASDHQNAQITAFAEVESVNSDAHKARFTLSLHGQELGREEVSVSEDGSAKVSFDVKSPSLWWPHGYGDATLYEVSVSLVKDQDEVHQVSKKFGIRTAEVVQQPDKHGKSFFFRVNGVDIFCGGSCWIPADNYLPSVTADRYRKWIELMVHGRQVMIRVWGGGNYEDDSFYDACDELGVLVWQDFMFGCGNYPTWPNLLESIRKESVYNVRRLRHHPSIVVWVGNNEDYQVQESAGLTYDFEDKNPENWLKTDFPARYIYEKILPEVVEEYSPSTFYHPGSPWGDGKTTSDPTVGDMHQWNVWHGTQEKYQIFDTLGGRFNSEFGMEAFPHMSTIDYFVENEADKFPQSHVLDFHNKADGHERRIATYLVENLRTATDLETHVYLTQVVQAETMMFGYRGWRRQWGDERHCGGALLWQLNDCWPTISWAIVDYFLRPKPAFYAVARVLNPIAVGVRREHHDWSVTHAQPPKTSKFELWVASSLQKEVQGTVELRFLSINTGLEVRERIVHENVSIVPNGTTNLIVDGLIDYKVHPEPHVLAVRIWVNGELVARDVDWPQPFKYLDLSNRGLEVKLVSESENEQTLLLSAQKPVKCLVFEEREGVRISDSAIDIVPGDEQRVTIKGMKPGDAPLKYKFLGQ</sequence>
<comment type="function">
    <text evidence="1">Exoglycosidase that cleaves the single beta-linked mannose residue from the non-reducing end of beta-mannosidic oligosaccharides of various complexity and length. Prefers mannobiose over mannotriose and has no activity against polymeric mannan. Is also severely restricted by galactosyl substitutions at the +1 subsite (By similarity).</text>
</comment>
<comment type="catalytic activity">
    <reaction>
        <text>Hydrolysis of terminal, non-reducing beta-D-mannose residues in beta-D-mannosides.</text>
        <dbReference type="EC" id="3.2.1.25"/>
    </reaction>
</comment>
<comment type="pathway">
    <text>Glycan metabolism; N-glycan degradation.</text>
</comment>
<comment type="miscellaneous">
    <text evidence="1">In contrast to clade A beta-mannosidases, which are likely secreted, clade B proteins appear to be intracellular.</text>
</comment>
<comment type="similarity">
    <text evidence="3">Belongs to the glycosyl hydrolase 2 family. Beta-mannosidase B subfamily.</text>
</comment>
<proteinExistence type="inferred from homology"/>
<protein>
    <recommendedName>
        <fullName>Beta-mannosidase B</fullName>
        <ecNumber>3.2.1.25</ecNumber>
    </recommendedName>
    <alternativeName>
        <fullName>Mannanase B</fullName>
        <shortName>Mannase B</shortName>
    </alternativeName>
</protein>
<name>MANBB_ASPCL</name>